<sequence>MAEKIKIGTMWLGGCSGCHLSIADFHEKLLDVMEHADFEFSPVLMDTKYDEIPELDVVVIEGGIVNDENREFAEELREKAKFVISYGTCAVYGGIPGLRNLWDKDEVIEEAYINSITTPNEEGVIPSEDVPHLEGRVKPLGEVIDVDFEVPGCPPRSDVAAEVVMALLKGEEIELPSTNLCEVCPREKPPEGLAMDFIKRQFEVGKPEDDLCLIPQGLICMGPATVSICGAECPSIAIPCRGCYGPTARVEDQGAKMISAIASDYKVEEDKTVDPEEVAEQLDDIVGTFYTFTLPAALIPMKIKKEGK</sequence>
<comment type="function">
    <text evidence="1">Part of a complex that provides reducing equivalents for heterodisulfide reductase.</text>
</comment>
<comment type="subunit">
    <text evidence="2">The F420-non-reducing hydrogenase is composed of three subunits; MvhA, MvhD and MvhG. It forms a complex with the heterodisulfide reductase (hdr).</text>
</comment>
<comment type="similarity">
    <text evidence="3">Belongs to the [NiFe]/[NiFeSe] hydrogenase small subunit family.</text>
</comment>
<gene>
    <name type="primary">mvhG</name>
    <name type="ordered locus">MTBMA_c15180</name>
</gene>
<dbReference type="EC" id="1.12.99.-"/>
<dbReference type="EMBL" id="CP001710">
    <property type="protein sequence ID" value="ADL59097.1"/>
    <property type="molecule type" value="Genomic_DNA"/>
</dbReference>
<dbReference type="RefSeq" id="WP_013296308.1">
    <property type="nucleotide sequence ID" value="NC_014408.1"/>
</dbReference>
<dbReference type="SMR" id="P60239"/>
<dbReference type="DIP" id="DIP-59605N"/>
<dbReference type="IntAct" id="P60239">
    <property type="interactions" value="1"/>
</dbReference>
<dbReference type="STRING" id="79929.MTBMA_c15180"/>
<dbReference type="TCDB" id="3.D.7.2.4">
    <property type="family name" value="the h2:heterodisulfide oxidoreductase (hho) family"/>
</dbReference>
<dbReference type="PaxDb" id="79929-MTBMA_c15180"/>
<dbReference type="GeneID" id="43707758"/>
<dbReference type="GeneID" id="9705227"/>
<dbReference type="KEGG" id="mmg:MTBMA_c15180"/>
<dbReference type="PATRIC" id="fig|79929.8.peg.1471"/>
<dbReference type="HOGENOM" id="CLU_053270_0_0_2"/>
<dbReference type="OrthoDB" id="37913at2157"/>
<dbReference type="Proteomes" id="UP000000345">
    <property type="component" value="Chromosome"/>
</dbReference>
<dbReference type="GO" id="GO:0051536">
    <property type="term" value="F:iron-sulfur cluster binding"/>
    <property type="evidence" value="ECO:0007669"/>
    <property type="project" value="InterPro"/>
</dbReference>
<dbReference type="GO" id="GO:0016491">
    <property type="term" value="F:oxidoreductase activity"/>
    <property type="evidence" value="ECO:0007669"/>
    <property type="project" value="UniProtKB-KW"/>
</dbReference>
<dbReference type="Gene3D" id="3.40.50.700">
    <property type="entry name" value="NADH:ubiquinone oxidoreductase-like, 20kDa subunit"/>
    <property type="match status" value="1"/>
</dbReference>
<dbReference type="InterPro" id="IPR051349">
    <property type="entry name" value="Hydrogenase_assoc-protein"/>
</dbReference>
<dbReference type="InterPro" id="IPR006137">
    <property type="entry name" value="NADH_UbQ_OxRdtase-like_20kDa"/>
</dbReference>
<dbReference type="InterPro" id="IPR037024">
    <property type="entry name" value="NiFe_Hase_small_N_sf"/>
</dbReference>
<dbReference type="PANTHER" id="PTHR42845">
    <property type="entry name" value="COENZYME F420-REDUCING HYDROGENASE, GAMMA SUBUNIT"/>
    <property type="match status" value="1"/>
</dbReference>
<dbReference type="PANTHER" id="PTHR42845:SF2">
    <property type="entry name" value="F420-NON-REDUCING HYDROGENASE VHU SUBUNIT G"/>
    <property type="match status" value="1"/>
</dbReference>
<dbReference type="Pfam" id="PF01058">
    <property type="entry name" value="Oxidored_q6"/>
    <property type="match status" value="1"/>
</dbReference>
<dbReference type="SUPFAM" id="SSF56770">
    <property type="entry name" value="HydA/Nqo6-like"/>
    <property type="match status" value="1"/>
</dbReference>
<protein>
    <recommendedName>
        <fullName>F420-non-reducing hydrogenase subunit G</fullName>
        <ecNumber>1.12.99.-</ecNumber>
    </recommendedName>
    <alternativeName>
        <fullName>Methyl viologen-reducing hydrogenase subunit gamma</fullName>
        <shortName>MVH subunit G</shortName>
    </alternativeName>
</protein>
<feature type="initiator methionine" description="Removed" evidence="2">
    <location>
        <position position="1"/>
    </location>
</feature>
<feature type="chain" id="PRO_0000204358" description="F420-non-reducing hydrogenase subunit G">
    <location>
        <begin position="2"/>
        <end position="308"/>
    </location>
</feature>
<feature type="sequence conflict" description="In Ref. 2; AA sequence." evidence="3" ref="2">
    <location>
        <position position="15"/>
    </location>
</feature>
<feature type="sequence conflict" description="In Ref. 2; AA sequence." evidence="3" ref="2">
    <original>S</original>
    <variation>I</variation>
    <location>
        <position position="21"/>
    </location>
</feature>
<reference key="1">
    <citation type="journal article" date="2010" name="J. Bacteriol.">
        <title>Complete genome sequence of Methanothermobacter marburgensis, a methanoarchaeon model organism.</title>
        <authorList>
            <person name="Liesegang H."/>
            <person name="Kaster A.K."/>
            <person name="Wiezer A."/>
            <person name="Goenrich M."/>
            <person name="Wollherr A."/>
            <person name="Seedorf H."/>
            <person name="Gottschalk G."/>
            <person name="Thauer R.K."/>
        </authorList>
    </citation>
    <scope>NUCLEOTIDE SEQUENCE [LARGE SCALE GENOMIC DNA]</scope>
    <source>
        <strain>ATCC BAA-927 / DSM 2133 / JCM 14651 / NBRC 100331 / OCM 82 / Marburg</strain>
    </source>
</reference>
<reference key="2">
    <citation type="journal article" date="1994" name="Eur. J. Biochem.">
        <title>H2: heterodisulfide oxidoreductase complex from Methanobacterium thermoautotrophicum. Composition and properties.</title>
        <authorList>
            <person name="Setzke E."/>
            <person name="Hedderich R."/>
            <person name="Heiden S."/>
            <person name="Thauer R.K."/>
        </authorList>
    </citation>
    <scope>PROTEIN SEQUENCE OF 2-21</scope>
    <scope>SUBUNIT</scope>
    <scope>ASSOCIATION WITH HETERODISULFIDE REDUCTASE</scope>
    <source>
        <strain>ATCC BAA-927 / DSM 2133 / JCM 14651 / NBRC 100331 / OCM 82 / Marburg</strain>
    </source>
</reference>
<reference key="3">
    <citation type="journal article" date="2003" name="Arch. Microbiol.">
        <title>Physiological role of the F420-non-reducing hydrogenase (Mvh) from Methanothermobacter marburgensis.</title>
        <authorList>
            <person name="Stojanowic A."/>
            <person name="Mander G.J."/>
            <person name="Duin E.C."/>
            <person name="Hedderich R."/>
        </authorList>
    </citation>
    <scope>FUNCTION</scope>
    <scope>ASSOCIATION WITH HETERODISULFIDE REDUCTASE</scope>
    <source>
        <strain>ATCC BAA-927 / DSM 2133 / JCM 14651 / NBRC 100331 / OCM 82 / Marburg</strain>
    </source>
</reference>
<name>MVHG_METTM</name>
<organism>
    <name type="scientific">Methanothermobacter marburgensis (strain ATCC BAA-927 / DSM 2133 / JCM 14651 / NBRC 100331 / OCM 82 / Marburg)</name>
    <name type="common">Methanobacterium thermoautotrophicum</name>
    <dbReference type="NCBI Taxonomy" id="79929"/>
    <lineage>
        <taxon>Archaea</taxon>
        <taxon>Methanobacteriati</taxon>
        <taxon>Methanobacteriota</taxon>
        <taxon>Methanomada group</taxon>
        <taxon>Methanobacteria</taxon>
        <taxon>Methanobacteriales</taxon>
        <taxon>Methanobacteriaceae</taxon>
        <taxon>Methanothermobacter</taxon>
    </lineage>
</organism>
<keyword id="KW-0903">Direct protein sequencing</keyword>
<keyword id="KW-0560">Oxidoreductase</keyword>
<accession>P60239</accession>
<accession>D9PXZ9</accession>
<evidence type="ECO:0000269" key="1">
    <source>
    </source>
</evidence>
<evidence type="ECO:0000269" key="2">
    <source>
    </source>
</evidence>
<evidence type="ECO:0000305" key="3"/>
<proteinExistence type="evidence at protein level"/>